<gene>
    <name evidence="1" type="primary">hisG</name>
    <name type="ordered locus">BC_1405</name>
</gene>
<evidence type="ECO:0000255" key="1">
    <source>
        <dbReference type="HAMAP-Rule" id="MF_01018"/>
    </source>
</evidence>
<reference key="1">
    <citation type="journal article" date="2003" name="Nature">
        <title>Genome sequence of Bacillus cereus and comparative analysis with Bacillus anthracis.</title>
        <authorList>
            <person name="Ivanova N."/>
            <person name="Sorokin A."/>
            <person name="Anderson I."/>
            <person name="Galleron N."/>
            <person name="Candelon B."/>
            <person name="Kapatral V."/>
            <person name="Bhattacharyya A."/>
            <person name="Reznik G."/>
            <person name="Mikhailova N."/>
            <person name="Lapidus A."/>
            <person name="Chu L."/>
            <person name="Mazur M."/>
            <person name="Goltsman E."/>
            <person name="Larsen N."/>
            <person name="D'Souza M."/>
            <person name="Walunas T."/>
            <person name="Grechkin Y."/>
            <person name="Pusch G."/>
            <person name="Haselkorn R."/>
            <person name="Fonstein M."/>
            <person name="Ehrlich S.D."/>
            <person name="Overbeek R."/>
            <person name="Kyrpides N.C."/>
        </authorList>
    </citation>
    <scope>NUCLEOTIDE SEQUENCE [LARGE SCALE GENOMIC DNA]</scope>
    <source>
        <strain>ATCC 14579 / DSM 31 / CCUG 7414 / JCM 2152 / NBRC 15305 / NCIMB 9373 / NCTC 2599 / NRRL B-3711</strain>
    </source>
</reference>
<keyword id="KW-0028">Amino-acid biosynthesis</keyword>
<keyword id="KW-0067">ATP-binding</keyword>
<keyword id="KW-0963">Cytoplasm</keyword>
<keyword id="KW-0328">Glycosyltransferase</keyword>
<keyword id="KW-0368">Histidine biosynthesis</keyword>
<keyword id="KW-0547">Nucleotide-binding</keyword>
<keyword id="KW-1185">Reference proteome</keyword>
<keyword id="KW-0808">Transferase</keyword>
<accession>Q81G07</accession>
<feature type="chain" id="PRO_0000151896" description="ATP phosphoribosyltransferase">
    <location>
        <begin position="1"/>
        <end position="211"/>
    </location>
</feature>
<proteinExistence type="inferred from homology"/>
<protein>
    <recommendedName>
        <fullName evidence="1">ATP phosphoribosyltransferase</fullName>
        <shortName evidence="1">ATP-PRT</shortName>
        <shortName evidence="1">ATP-PRTase</shortName>
        <ecNumber evidence="1">2.4.2.17</ecNumber>
    </recommendedName>
</protein>
<organism>
    <name type="scientific">Bacillus cereus (strain ATCC 14579 / DSM 31 / CCUG 7414 / JCM 2152 / NBRC 15305 / NCIMB 9373 / NCTC 2599 / NRRL B-3711)</name>
    <dbReference type="NCBI Taxonomy" id="226900"/>
    <lineage>
        <taxon>Bacteria</taxon>
        <taxon>Bacillati</taxon>
        <taxon>Bacillota</taxon>
        <taxon>Bacilli</taxon>
        <taxon>Bacillales</taxon>
        <taxon>Bacillaceae</taxon>
        <taxon>Bacillus</taxon>
        <taxon>Bacillus cereus group</taxon>
    </lineage>
</organism>
<name>HIS1_BACCR</name>
<sequence length="211" mass="23699">MRNIQIALTKGRLEKHVIPLFEQIGIDCSELKNKGRKLVFQSKNTNVSFILVKAVDVATYVEHGVADIGIVGKDILMENEKDIYEMLDLGVGICKFCVASIPTYNPKSYRKKRIATKYPHITSTYFHDKGEDVEIIKIEGSVEIAPLLGLADAIVDIVETGKTLQENGLIVFEEMYFISARMIVNKAALKTKKDEIFSIINMMEQEILSGK</sequence>
<comment type="function">
    <text evidence="1">Catalyzes the condensation of ATP and 5-phosphoribose 1-diphosphate to form N'-(5'-phosphoribosyl)-ATP (PR-ATP). Has a crucial role in the pathway because the rate of histidine biosynthesis seems to be controlled primarily by regulation of HisG enzymatic activity.</text>
</comment>
<comment type="catalytic activity">
    <reaction evidence="1">
        <text>1-(5-phospho-beta-D-ribosyl)-ATP + diphosphate = 5-phospho-alpha-D-ribose 1-diphosphate + ATP</text>
        <dbReference type="Rhea" id="RHEA:18473"/>
        <dbReference type="ChEBI" id="CHEBI:30616"/>
        <dbReference type="ChEBI" id="CHEBI:33019"/>
        <dbReference type="ChEBI" id="CHEBI:58017"/>
        <dbReference type="ChEBI" id="CHEBI:73183"/>
        <dbReference type="EC" id="2.4.2.17"/>
    </reaction>
</comment>
<comment type="pathway">
    <text evidence="1">Amino-acid biosynthesis; L-histidine biosynthesis; L-histidine from 5-phospho-alpha-D-ribose 1-diphosphate: step 1/9.</text>
</comment>
<comment type="subunit">
    <text evidence="1">Heteromultimer composed of HisG and HisZ subunits.</text>
</comment>
<comment type="subcellular location">
    <subcellularLocation>
        <location evidence="1">Cytoplasm</location>
    </subcellularLocation>
</comment>
<comment type="domain">
    <text>Lacks the C-terminal regulatory region which is replaced by HisZ.</text>
</comment>
<comment type="similarity">
    <text evidence="1">Belongs to the ATP phosphoribosyltransferase family. Short subfamily.</text>
</comment>
<dbReference type="EC" id="2.4.2.17" evidence="1"/>
<dbReference type="EMBL" id="AE016877">
    <property type="protein sequence ID" value="AAP08386.1"/>
    <property type="molecule type" value="Genomic_DNA"/>
</dbReference>
<dbReference type="RefSeq" id="NP_831185.1">
    <property type="nucleotide sequence ID" value="NC_004722.1"/>
</dbReference>
<dbReference type="RefSeq" id="WP_001244493.1">
    <property type="nucleotide sequence ID" value="NZ_CP138336.1"/>
</dbReference>
<dbReference type="SMR" id="Q81G07"/>
<dbReference type="STRING" id="226900.BC_1405"/>
<dbReference type="KEGG" id="bce:BC1405"/>
<dbReference type="PATRIC" id="fig|226900.8.peg.1382"/>
<dbReference type="HOGENOM" id="CLU_038115_2_0_9"/>
<dbReference type="OrthoDB" id="9801867at2"/>
<dbReference type="UniPathway" id="UPA00031">
    <property type="reaction ID" value="UER00006"/>
</dbReference>
<dbReference type="Proteomes" id="UP000001417">
    <property type="component" value="Chromosome"/>
</dbReference>
<dbReference type="GO" id="GO:0005737">
    <property type="term" value="C:cytoplasm"/>
    <property type="evidence" value="ECO:0007669"/>
    <property type="project" value="UniProtKB-SubCell"/>
</dbReference>
<dbReference type="GO" id="GO:0005524">
    <property type="term" value="F:ATP binding"/>
    <property type="evidence" value="ECO:0007669"/>
    <property type="project" value="UniProtKB-KW"/>
</dbReference>
<dbReference type="GO" id="GO:0003879">
    <property type="term" value="F:ATP phosphoribosyltransferase activity"/>
    <property type="evidence" value="ECO:0000318"/>
    <property type="project" value="GO_Central"/>
</dbReference>
<dbReference type="GO" id="GO:0000105">
    <property type="term" value="P:L-histidine biosynthetic process"/>
    <property type="evidence" value="ECO:0000318"/>
    <property type="project" value="GO_Central"/>
</dbReference>
<dbReference type="CDD" id="cd13595">
    <property type="entry name" value="PBP2_HisGs"/>
    <property type="match status" value="1"/>
</dbReference>
<dbReference type="FunFam" id="3.40.190.10:FF:000011">
    <property type="entry name" value="ATP phosphoribosyltransferase"/>
    <property type="match status" value="1"/>
</dbReference>
<dbReference type="Gene3D" id="3.40.190.10">
    <property type="entry name" value="Periplasmic binding protein-like II"/>
    <property type="match status" value="2"/>
</dbReference>
<dbReference type="HAMAP" id="MF_01018">
    <property type="entry name" value="HisG_Short"/>
    <property type="match status" value="1"/>
</dbReference>
<dbReference type="InterPro" id="IPR013820">
    <property type="entry name" value="ATP_PRibTrfase_cat"/>
</dbReference>
<dbReference type="InterPro" id="IPR018198">
    <property type="entry name" value="ATP_PRibTrfase_CS"/>
</dbReference>
<dbReference type="InterPro" id="IPR001348">
    <property type="entry name" value="ATP_PRibTrfase_HisG"/>
</dbReference>
<dbReference type="InterPro" id="IPR024893">
    <property type="entry name" value="ATP_PRibTrfase_HisG_short"/>
</dbReference>
<dbReference type="NCBIfam" id="TIGR00070">
    <property type="entry name" value="hisG"/>
    <property type="match status" value="1"/>
</dbReference>
<dbReference type="PANTHER" id="PTHR21403:SF8">
    <property type="entry name" value="ATP PHOSPHORIBOSYLTRANSFERASE"/>
    <property type="match status" value="1"/>
</dbReference>
<dbReference type="PANTHER" id="PTHR21403">
    <property type="entry name" value="ATP PHOSPHORIBOSYLTRANSFERASE ATP-PRTASE"/>
    <property type="match status" value="1"/>
</dbReference>
<dbReference type="Pfam" id="PF01634">
    <property type="entry name" value="HisG"/>
    <property type="match status" value="1"/>
</dbReference>
<dbReference type="SUPFAM" id="SSF53850">
    <property type="entry name" value="Periplasmic binding protein-like II"/>
    <property type="match status" value="1"/>
</dbReference>
<dbReference type="PROSITE" id="PS01316">
    <property type="entry name" value="ATP_P_PHORIBOSYLTR"/>
    <property type="match status" value="1"/>
</dbReference>